<keyword id="KW-0031">Aminopeptidase</keyword>
<keyword id="KW-0378">Hydrolase</keyword>
<keyword id="KW-0479">Metal-binding</keyword>
<keyword id="KW-0482">Metalloprotease</keyword>
<keyword id="KW-0645">Protease</keyword>
<keyword id="KW-1185">Reference proteome</keyword>
<keyword id="KW-0862">Zinc</keyword>
<accession>Q50022</accession>
<accession>O08111</accession>
<protein>
    <recommendedName>
        <fullName>Probable M18 family aminopeptidase 2</fullName>
        <ecNumber>3.4.11.-</ecNumber>
    </recommendedName>
</protein>
<organism>
    <name type="scientific">Mycobacterium leprae (strain TN)</name>
    <dbReference type="NCBI Taxonomy" id="272631"/>
    <lineage>
        <taxon>Bacteria</taxon>
        <taxon>Bacillati</taxon>
        <taxon>Actinomycetota</taxon>
        <taxon>Actinomycetes</taxon>
        <taxon>Mycobacteriales</taxon>
        <taxon>Mycobacteriaceae</taxon>
        <taxon>Mycobacterium</taxon>
    </lineage>
</organism>
<gene>
    <name type="primary">apeB</name>
    <name type="synonym">pepC</name>
    <name type="synonym">pepX</name>
    <name type="ordered locus">ML2213</name>
    <name type="ORF">MLCB5.29</name>
</gene>
<name>APEB_MYCLE</name>
<comment type="cofactor">
    <cofactor evidence="1">
        <name>Zn(2+)</name>
        <dbReference type="ChEBI" id="CHEBI:29105"/>
    </cofactor>
</comment>
<comment type="similarity">
    <text evidence="3">Belongs to the peptidase M18 family.</text>
</comment>
<comment type="sequence caution" evidence="3">
    <conflict type="erroneous initiation">
        <sequence resource="EMBL-CDS" id="AAA62998"/>
    </conflict>
</comment>
<comment type="sequence caution" evidence="3">
    <conflict type="erroneous initiation">
        <sequence resource="EMBL-CDS" id="CAB08404"/>
    </conflict>
</comment>
<comment type="sequence caution" evidence="3">
    <conflict type="erroneous initiation">
        <sequence resource="EMBL-CDS" id="CAC31168"/>
    </conflict>
</comment>
<proteinExistence type="inferred from homology"/>
<evidence type="ECO:0000250" key="1"/>
<evidence type="ECO:0000255" key="2"/>
<evidence type="ECO:0000305" key="3"/>
<reference key="1">
    <citation type="submission" date="1994-09" db="EMBL/GenBank/DDBJ databases">
        <authorList>
            <person name="Smith D.R."/>
            <person name="Robison K."/>
        </authorList>
    </citation>
    <scope>NUCLEOTIDE SEQUENCE [GENOMIC DNA]</scope>
</reference>
<reference key="2">
    <citation type="journal article" date="2001" name="Nature">
        <title>Massive gene decay in the leprosy bacillus.</title>
        <authorList>
            <person name="Cole S.T."/>
            <person name="Eiglmeier K."/>
            <person name="Parkhill J."/>
            <person name="James K.D."/>
            <person name="Thomson N.R."/>
            <person name="Wheeler P.R."/>
            <person name="Honore N."/>
            <person name="Garnier T."/>
            <person name="Churcher C.M."/>
            <person name="Harris D.E."/>
            <person name="Mungall K.L."/>
            <person name="Basham D."/>
            <person name="Brown D."/>
            <person name="Chillingworth T."/>
            <person name="Connor R."/>
            <person name="Davies R.M."/>
            <person name="Devlin K."/>
            <person name="Duthoy S."/>
            <person name="Feltwell T."/>
            <person name="Fraser A."/>
            <person name="Hamlin N."/>
            <person name="Holroyd S."/>
            <person name="Hornsby T."/>
            <person name="Jagels K."/>
            <person name="Lacroix C."/>
            <person name="Maclean J."/>
            <person name="Moule S."/>
            <person name="Murphy L.D."/>
            <person name="Oliver K."/>
            <person name="Quail M.A."/>
            <person name="Rajandream M.A."/>
            <person name="Rutherford K.M."/>
            <person name="Rutter S."/>
            <person name="Seeger K."/>
            <person name="Simon S."/>
            <person name="Simmonds M."/>
            <person name="Skelton J."/>
            <person name="Squares R."/>
            <person name="Squares S."/>
            <person name="Stevens K."/>
            <person name="Taylor K."/>
            <person name="Whitehead S."/>
            <person name="Woodward J.R."/>
            <person name="Barrell B.G."/>
        </authorList>
    </citation>
    <scope>NUCLEOTIDE SEQUENCE [LARGE SCALE GENOMIC DNA]</scope>
    <source>
        <strain>TN</strain>
    </source>
</reference>
<dbReference type="EC" id="3.4.11.-"/>
<dbReference type="EMBL" id="U15182">
    <property type="protein sequence ID" value="AAA62998.1"/>
    <property type="status" value="ALT_INIT"/>
    <property type="molecule type" value="Genomic_DNA"/>
</dbReference>
<dbReference type="EMBL" id="Z95151">
    <property type="protein sequence ID" value="CAB08404.1"/>
    <property type="status" value="ALT_INIT"/>
    <property type="molecule type" value="Genomic_DNA"/>
</dbReference>
<dbReference type="EMBL" id="AL583924">
    <property type="protein sequence ID" value="CAC31168.1"/>
    <property type="status" value="ALT_INIT"/>
    <property type="molecule type" value="Genomic_DNA"/>
</dbReference>
<dbReference type="PIR" id="H87185">
    <property type="entry name" value="H87185"/>
</dbReference>
<dbReference type="SMR" id="Q50022"/>
<dbReference type="KEGG" id="mle:ML2213"/>
<dbReference type="Leproma" id="ML2213"/>
<dbReference type="eggNOG" id="COG1362">
    <property type="taxonomic scope" value="Bacteria"/>
</dbReference>
<dbReference type="HOGENOM" id="CLU_019532_2_0_11"/>
<dbReference type="Proteomes" id="UP000000806">
    <property type="component" value="Chromosome"/>
</dbReference>
<dbReference type="GO" id="GO:0005737">
    <property type="term" value="C:cytoplasm"/>
    <property type="evidence" value="ECO:0007669"/>
    <property type="project" value="UniProtKB-ARBA"/>
</dbReference>
<dbReference type="GO" id="GO:0004177">
    <property type="term" value="F:aminopeptidase activity"/>
    <property type="evidence" value="ECO:0007669"/>
    <property type="project" value="UniProtKB-UniRule"/>
</dbReference>
<dbReference type="GO" id="GO:0008237">
    <property type="term" value="F:metallopeptidase activity"/>
    <property type="evidence" value="ECO:0007669"/>
    <property type="project" value="UniProtKB-UniRule"/>
</dbReference>
<dbReference type="GO" id="GO:0008270">
    <property type="term" value="F:zinc ion binding"/>
    <property type="evidence" value="ECO:0007669"/>
    <property type="project" value="UniProtKB-UniRule"/>
</dbReference>
<dbReference type="GO" id="GO:0006508">
    <property type="term" value="P:proteolysis"/>
    <property type="evidence" value="ECO:0007669"/>
    <property type="project" value="UniProtKB-UniRule"/>
</dbReference>
<dbReference type="CDD" id="cd05658">
    <property type="entry name" value="M18_DAP"/>
    <property type="match status" value="1"/>
</dbReference>
<dbReference type="Gene3D" id="2.30.250.10">
    <property type="entry name" value="Aminopeptidase i, Domain 2"/>
    <property type="match status" value="1"/>
</dbReference>
<dbReference type="Gene3D" id="3.40.630.10">
    <property type="entry name" value="Zn peptidases"/>
    <property type="match status" value="1"/>
</dbReference>
<dbReference type="HAMAP" id="MF_00467">
    <property type="entry name" value="Aminopeptidase_M18_2"/>
    <property type="match status" value="1"/>
</dbReference>
<dbReference type="InterPro" id="IPR022984">
    <property type="entry name" value="M18_aminopeptidase_2"/>
</dbReference>
<dbReference type="InterPro" id="IPR001948">
    <property type="entry name" value="Peptidase_M18"/>
</dbReference>
<dbReference type="InterPro" id="IPR023358">
    <property type="entry name" value="Peptidase_M18_dom2"/>
</dbReference>
<dbReference type="NCBIfam" id="NF002759">
    <property type="entry name" value="PRK02813.1"/>
    <property type="match status" value="1"/>
</dbReference>
<dbReference type="PANTHER" id="PTHR28570">
    <property type="entry name" value="ASPARTYL AMINOPEPTIDASE"/>
    <property type="match status" value="1"/>
</dbReference>
<dbReference type="PANTHER" id="PTHR28570:SF3">
    <property type="entry name" value="ASPARTYL AMINOPEPTIDASE"/>
    <property type="match status" value="1"/>
</dbReference>
<dbReference type="Pfam" id="PF02127">
    <property type="entry name" value="Peptidase_M18"/>
    <property type="match status" value="1"/>
</dbReference>
<dbReference type="PRINTS" id="PR00932">
    <property type="entry name" value="AMINO1PTASE"/>
</dbReference>
<dbReference type="SUPFAM" id="SSF101821">
    <property type="entry name" value="Aminopeptidase/glucanase lid domain"/>
    <property type="match status" value="1"/>
</dbReference>
<dbReference type="SUPFAM" id="SSF53187">
    <property type="entry name" value="Zn-dependent exopeptidases"/>
    <property type="match status" value="1"/>
</dbReference>
<feature type="chain" id="PRO_0000173463" description="Probable M18 family aminopeptidase 2">
    <location>
        <begin position="1"/>
        <end position="426"/>
    </location>
</feature>
<feature type="binding site" evidence="2">
    <location>
        <position position="79"/>
    </location>
    <ligand>
        <name>Zn(2+)</name>
        <dbReference type="ChEBI" id="CHEBI:29105"/>
    </ligand>
</feature>
<feature type="binding site" evidence="2">
    <location>
        <position position="156"/>
    </location>
    <ligand>
        <name>Zn(2+)</name>
        <dbReference type="ChEBI" id="CHEBI:29105"/>
    </ligand>
</feature>
<feature type="binding site" evidence="2">
    <location>
        <position position="399"/>
    </location>
    <ligand>
        <name>Zn(2+)</name>
        <dbReference type="ChEBI" id="CHEBI:29105"/>
    </ligand>
</feature>
<sequence length="426" mass="45594">MPASAADLCEFINASPSPFHVCATVAGRLLDAGYAELSEVERWPDHPGRYFIVRAGSLVAWSAGQGVKAHAPFRIVGAHTDSPNLRVKQHPDLLVAGWRVVALQPYGGAWLNSWLDRDLGVSGRLSVRSAGKGSEITDRLVRIDDPILRVPQLAIHLAEDRKSLTLDPQRHVNAVWGVGDKAGSLLEYVAERTGVAVADVLAVDLMTHDLVPSMVIGADANLLSAPRLDNQVSCYAGMEALLASVPHDCLPVLALFDHEEVGSTSDRGARSNLLSTVLERIVLAAGGGRDDYLRRLPASLLVSADMAHATHPNYPECHEPSHLIEVNAGPVLKVHPNLRYATDGRTAAAFEVACQQAGVRLQRYEHRADRPCGSTIGPLASARTGIPTVDVGAAQLAMHSARELMGAHDVAVYSAALQAFFSADLF</sequence>